<feature type="chain" id="PRO_0000222482" description="Non-structural protein NS2">
    <location>
        <begin position="1"/>
        <end position="275"/>
    </location>
</feature>
<reference key="1">
    <citation type="submission" date="1997-12" db="EMBL/GenBank/DDBJ databases">
        <title>Complete nucleotide sequence and genome organization of an infectious clone of Diatraea saccharalis densovirus (DsDNV).</title>
        <authorList>
            <person name="Boublik Y."/>
            <person name="Kouassi K.N."/>
            <person name="Cavallaro C."/>
            <person name="Bergoin M."/>
        </authorList>
    </citation>
    <scope>NUCLEOTIDE SEQUENCE [GENOMIC DNA]</scope>
</reference>
<proteinExistence type="predicted"/>
<protein>
    <recommendedName>
        <fullName>Non-structural protein NS2</fullName>
    </recommendedName>
</protein>
<gene>
    <name type="primary">NS2</name>
</gene>
<dbReference type="EMBL" id="AF036333">
    <property type="protein sequence ID" value="AAC18000.1"/>
    <property type="molecule type" value="Genomic_DNA"/>
</dbReference>
<dbReference type="RefSeq" id="NP_046814.1">
    <property type="nucleotide sequence ID" value="NC_001899.1"/>
</dbReference>
<dbReference type="KEGG" id="vg:1449605"/>
<dbReference type="OrthoDB" id="6349at10239"/>
<dbReference type="Proteomes" id="UP000007205">
    <property type="component" value="Genome"/>
</dbReference>
<dbReference type="InterPro" id="IPR016770">
    <property type="entry name" value="Non-structural_NS2"/>
</dbReference>
<dbReference type="PIRSF" id="PIRSF020196">
    <property type="entry name" value="Nonstructural_NS2"/>
    <property type="match status" value="1"/>
</dbReference>
<name>VNS2_DSDNV</name>
<organismHost>
    <name type="scientific">Diatraea saccharalis</name>
    <name type="common">sugarcane borer</name>
    <dbReference type="NCBI Taxonomy" id="40085"/>
</organismHost>
<sequence length="275" mass="31154">METPTEKPIVLPDLIKVIYESHQQDHPLVNNVAWWQLHLENVNGHMEDEEQWPALQKNLKKTFNTWQRNWKKWAINSLDTLLGKVLNLPAHISAMSLSYEIFSSVINVWTSCVSTEEVDETDCSDFLKKETTSTSSTIALTPIGVAGTSGLVKSSPSELFRKLANPSNISGSLNEPTGMMSSSISLYENGESVQYTLEEKVGKYRVTMNVYDGPESLKKEKWYQAPIARITMSVNNKSTKLAVDQMLAVLTEDFMKRKPTRQGNSLTYGKRQKRY</sequence>
<organism>
    <name type="scientific">Diatraea saccharalis densovirus</name>
    <name type="common">DsDNV</name>
    <dbReference type="NCBI Taxonomy" id="72003"/>
    <lineage>
        <taxon>Viruses</taxon>
        <taxon>Monodnaviria</taxon>
        <taxon>Shotokuvirae</taxon>
        <taxon>Cossaviricota</taxon>
        <taxon>Quintoviricetes</taxon>
        <taxon>Piccovirales</taxon>
        <taxon>Parvoviridae</taxon>
        <taxon>Densovirinae</taxon>
    </lineage>
</organism>
<accession>O71154</accession>